<feature type="chain" id="PRO_1000059500" description="Chaperone protein DnaK">
    <location>
        <begin position="1"/>
        <end position="632"/>
    </location>
</feature>
<feature type="region of interest" description="Disordered" evidence="2">
    <location>
        <begin position="599"/>
        <end position="632"/>
    </location>
</feature>
<feature type="compositionally biased region" description="Low complexity" evidence="2">
    <location>
        <begin position="599"/>
        <end position="613"/>
    </location>
</feature>
<feature type="modified residue" description="Phosphothreonine; by autocatalysis" evidence="1">
    <location>
        <position position="198"/>
    </location>
</feature>
<proteinExistence type="inferred from homology"/>
<organism>
    <name type="scientific">Actinobacillus pleuropneumoniae serotype 5b (strain L20)</name>
    <dbReference type="NCBI Taxonomy" id="416269"/>
    <lineage>
        <taxon>Bacteria</taxon>
        <taxon>Pseudomonadati</taxon>
        <taxon>Pseudomonadota</taxon>
        <taxon>Gammaproteobacteria</taxon>
        <taxon>Pasteurellales</taxon>
        <taxon>Pasteurellaceae</taxon>
        <taxon>Actinobacillus</taxon>
    </lineage>
</organism>
<accession>A3N3K0</accession>
<dbReference type="EMBL" id="CP000569">
    <property type="protein sequence ID" value="ABN74986.1"/>
    <property type="molecule type" value="Genomic_DNA"/>
</dbReference>
<dbReference type="RefSeq" id="WP_005599634.1">
    <property type="nucleotide sequence ID" value="NC_009053.1"/>
</dbReference>
<dbReference type="SMR" id="A3N3K0"/>
<dbReference type="STRING" id="416269.APL_1906"/>
<dbReference type="EnsemblBacteria" id="ABN74986">
    <property type="protein sequence ID" value="ABN74986"/>
    <property type="gene ID" value="APL_1906"/>
</dbReference>
<dbReference type="GeneID" id="48600211"/>
<dbReference type="KEGG" id="apl:APL_1906"/>
<dbReference type="eggNOG" id="COG0443">
    <property type="taxonomic scope" value="Bacteria"/>
</dbReference>
<dbReference type="HOGENOM" id="CLU_005965_2_1_6"/>
<dbReference type="Proteomes" id="UP000001432">
    <property type="component" value="Chromosome"/>
</dbReference>
<dbReference type="GO" id="GO:0005524">
    <property type="term" value="F:ATP binding"/>
    <property type="evidence" value="ECO:0007669"/>
    <property type="project" value="UniProtKB-UniRule"/>
</dbReference>
<dbReference type="GO" id="GO:0140662">
    <property type="term" value="F:ATP-dependent protein folding chaperone"/>
    <property type="evidence" value="ECO:0007669"/>
    <property type="project" value="InterPro"/>
</dbReference>
<dbReference type="GO" id="GO:0051082">
    <property type="term" value="F:unfolded protein binding"/>
    <property type="evidence" value="ECO:0007669"/>
    <property type="project" value="InterPro"/>
</dbReference>
<dbReference type="CDD" id="cd10234">
    <property type="entry name" value="ASKHA_NBD_HSP70_DnaK-like"/>
    <property type="match status" value="1"/>
</dbReference>
<dbReference type="FunFam" id="2.60.34.10:FF:000014">
    <property type="entry name" value="Chaperone protein DnaK HSP70"/>
    <property type="match status" value="1"/>
</dbReference>
<dbReference type="FunFam" id="1.20.1270.10:FF:000001">
    <property type="entry name" value="Molecular chaperone DnaK"/>
    <property type="match status" value="1"/>
</dbReference>
<dbReference type="FunFam" id="3.30.420.40:FF:000004">
    <property type="entry name" value="Molecular chaperone DnaK"/>
    <property type="match status" value="1"/>
</dbReference>
<dbReference type="FunFam" id="3.90.640.10:FF:000003">
    <property type="entry name" value="Molecular chaperone DnaK"/>
    <property type="match status" value="1"/>
</dbReference>
<dbReference type="Gene3D" id="1.20.1270.10">
    <property type="match status" value="1"/>
</dbReference>
<dbReference type="Gene3D" id="3.30.420.40">
    <property type="match status" value="2"/>
</dbReference>
<dbReference type="Gene3D" id="3.90.640.10">
    <property type="entry name" value="Actin, Chain A, domain 4"/>
    <property type="match status" value="1"/>
</dbReference>
<dbReference type="Gene3D" id="2.60.34.10">
    <property type="entry name" value="Substrate Binding Domain Of DNAk, Chain A, domain 1"/>
    <property type="match status" value="1"/>
</dbReference>
<dbReference type="HAMAP" id="MF_00332">
    <property type="entry name" value="DnaK"/>
    <property type="match status" value="1"/>
</dbReference>
<dbReference type="InterPro" id="IPR043129">
    <property type="entry name" value="ATPase_NBD"/>
</dbReference>
<dbReference type="InterPro" id="IPR012725">
    <property type="entry name" value="Chaperone_DnaK"/>
</dbReference>
<dbReference type="InterPro" id="IPR018181">
    <property type="entry name" value="Heat_shock_70_CS"/>
</dbReference>
<dbReference type="InterPro" id="IPR029048">
    <property type="entry name" value="HSP70_C_sf"/>
</dbReference>
<dbReference type="InterPro" id="IPR029047">
    <property type="entry name" value="HSP70_peptide-bd_sf"/>
</dbReference>
<dbReference type="InterPro" id="IPR013126">
    <property type="entry name" value="Hsp_70_fam"/>
</dbReference>
<dbReference type="NCBIfam" id="NF001413">
    <property type="entry name" value="PRK00290.1"/>
    <property type="match status" value="1"/>
</dbReference>
<dbReference type="NCBIfam" id="TIGR02350">
    <property type="entry name" value="prok_dnaK"/>
    <property type="match status" value="1"/>
</dbReference>
<dbReference type="PANTHER" id="PTHR19375">
    <property type="entry name" value="HEAT SHOCK PROTEIN 70KDA"/>
    <property type="match status" value="1"/>
</dbReference>
<dbReference type="Pfam" id="PF00012">
    <property type="entry name" value="HSP70"/>
    <property type="match status" value="1"/>
</dbReference>
<dbReference type="PRINTS" id="PR00301">
    <property type="entry name" value="HEATSHOCK70"/>
</dbReference>
<dbReference type="SUPFAM" id="SSF53067">
    <property type="entry name" value="Actin-like ATPase domain"/>
    <property type="match status" value="2"/>
</dbReference>
<dbReference type="SUPFAM" id="SSF100934">
    <property type="entry name" value="Heat shock protein 70kD (HSP70), C-terminal subdomain"/>
    <property type="match status" value="1"/>
</dbReference>
<dbReference type="SUPFAM" id="SSF100920">
    <property type="entry name" value="Heat shock protein 70kD (HSP70), peptide-binding domain"/>
    <property type="match status" value="1"/>
</dbReference>
<dbReference type="PROSITE" id="PS00297">
    <property type="entry name" value="HSP70_1"/>
    <property type="match status" value="1"/>
</dbReference>
<dbReference type="PROSITE" id="PS00329">
    <property type="entry name" value="HSP70_2"/>
    <property type="match status" value="1"/>
</dbReference>
<dbReference type="PROSITE" id="PS01036">
    <property type="entry name" value="HSP70_3"/>
    <property type="match status" value="1"/>
</dbReference>
<protein>
    <recommendedName>
        <fullName evidence="1">Chaperone protein DnaK</fullName>
    </recommendedName>
    <alternativeName>
        <fullName evidence="1">HSP70</fullName>
    </alternativeName>
    <alternativeName>
        <fullName evidence="1">Heat shock 70 kDa protein</fullName>
    </alternativeName>
    <alternativeName>
        <fullName evidence="1">Heat shock protein 70</fullName>
    </alternativeName>
</protein>
<evidence type="ECO:0000255" key="1">
    <source>
        <dbReference type="HAMAP-Rule" id="MF_00332"/>
    </source>
</evidence>
<evidence type="ECO:0000256" key="2">
    <source>
        <dbReference type="SAM" id="MobiDB-lite"/>
    </source>
</evidence>
<name>DNAK_ACTP2</name>
<gene>
    <name evidence="1" type="primary">dnaK</name>
    <name type="ordered locus">APL_1906</name>
</gene>
<comment type="function">
    <text evidence="1">Acts as a chaperone.</text>
</comment>
<comment type="induction">
    <text evidence="1">By stress conditions e.g. heat shock.</text>
</comment>
<comment type="similarity">
    <text evidence="1">Belongs to the heat shock protein 70 family.</text>
</comment>
<sequence>MGKIIGIDLGTTNSCVAVMDGDKARVIENAEGARTTPSIIAYTDNETLVGQPAKRQAITNPKNTLFAIKRLIGRRFESEEVQRDIKIMPFEITRADNGDAWVNVKGDKLAPPQISAEVLKKMKKTAEDFLGEAVTEAVITVPAYFNDAQRQATIDAGRIAGLDVKRIINEPTAAALAFGLGSTKENQVIAVYDLGGGTFDISIIEIDNFDGEQTFEVLATGGNTHLGGEDFDNRVIDYIIDEFKKEQGVDLRNDPMALQRVKEAAEKAKIELSSAQSTEVNLPYITADATGPKHLAINVTRAKLEALVEDLVASSIESLKTVLKDAGKSVNEINDIILVGGQTRMPLVQQKVAEFFGKEARKDVNPDEAVAIGAAVQGGVLKGDVKDVLLLDVTPLSLGIETMGGVMTVLIEKNTTIPTKKSQVFSTAEDNQSAVTIHVLQGERKQASANKSLGQFNLEGINPAPRGMPQIEVTFDIDANGVINVSAKDKNTGKEQQIRIQASSGLSDEEIEQMVRDAEANAEADKKFEELVQARNQADGIAHATRKQIEEAGDALNADDKAKIEAAIADLEKAAKGDDKAEIDAKTEALIKASEPLMQAAQAKAQAGEQPQQSAKDDGVVDAEFEEVKDNK</sequence>
<reference key="1">
    <citation type="journal article" date="2008" name="J. Bacteriol.">
        <title>The complete genome sequence of Actinobacillus pleuropneumoniae L20 (serotype 5b).</title>
        <authorList>
            <person name="Foote S.J."/>
            <person name="Bosse J.T."/>
            <person name="Bouevitch A.B."/>
            <person name="Langford P.R."/>
            <person name="Young N.M."/>
            <person name="Nash J.H.E."/>
        </authorList>
    </citation>
    <scope>NUCLEOTIDE SEQUENCE [LARGE SCALE GENOMIC DNA]</scope>
    <source>
        <strain>L20</strain>
    </source>
</reference>
<keyword id="KW-0067">ATP-binding</keyword>
<keyword id="KW-0143">Chaperone</keyword>
<keyword id="KW-0547">Nucleotide-binding</keyword>
<keyword id="KW-0597">Phosphoprotein</keyword>
<keyword id="KW-1185">Reference proteome</keyword>
<keyword id="KW-0346">Stress response</keyword>